<protein>
    <recommendedName>
        <fullName evidence="1">Ribosome-recycling factor</fullName>
        <shortName evidence="1">RRF</shortName>
    </recommendedName>
    <alternativeName>
        <fullName evidence="1">Ribosome-releasing factor</fullName>
    </alternativeName>
</protein>
<accession>C3LQ29</accession>
<reference key="1">
    <citation type="journal article" date="2008" name="PLoS ONE">
        <title>A recalibrated molecular clock and independent origins for the cholera pandemic clones.</title>
        <authorList>
            <person name="Feng L."/>
            <person name="Reeves P.R."/>
            <person name="Lan R."/>
            <person name="Ren Y."/>
            <person name="Gao C."/>
            <person name="Zhou Z."/>
            <person name="Ren Y."/>
            <person name="Cheng J."/>
            <person name="Wang W."/>
            <person name="Wang J."/>
            <person name="Qian W."/>
            <person name="Li D."/>
            <person name="Wang L."/>
        </authorList>
    </citation>
    <scope>NUCLEOTIDE SEQUENCE [LARGE SCALE GENOMIC DNA]</scope>
    <source>
        <strain>M66-2</strain>
    </source>
</reference>
<evidence type="ECO:0000255" key="1">
    <source>
        <dbReference type="HAMAP-Rule" id="MF_00040"/>
    </source>
</evidence>
<dbReference type="EMBL" id="CP001233">
    <property type="protein sequence ID" value="ACP06481.1"/>
    <property type="molecule type" value="Genomic_DNA"/>
</dbReference>
<dbReference type="RefSeq" id="WP_000606619.1">
    <property type="nucleotide sequence ID" value="NC_012578.1"/>
</dbReference>
<dbReference type="SMR" id="C3LQ29"/>
<dbReference type="GeneID" id="88783084"/>
<dbReference type="KEGG" id="vcm:VCM66_2180"/>
<dbReference type="HOGENOM" id="CLU_073981_2_1_6"/>
<dbReference type="Proteomes" id="UP000001217">
    <property type="component" value="Chromosome I"/>
</dbReference>
<dbReference type="GO" id="GO:0005829">
    <property type="term" value="C:cytosol"/>
    <property type="evidence" value="ECO:0007669"/>
    <property type="project" value="GOC"/>
</dbReference>
<dbReference type="GO" id="GO:0043023">
    <property type="term" value="F:ribosomal large subunit binding"/>
    <property type="evidence" value="ECO:0007669"/>
    <property type="project" value="TreeGrafter"/>
</dbReference>
<dbReference type="GO" id="GO:0002184">
    <property type="term" value="P:cytoplasmic translational termination"/>
    <property type="evidence" value="ECO:0007669"/>
    <property type="project" value="TreeGrafter"/>
</dbReference>
<dbReference type="CDD" id="cd00520">
    <property type="entry name" value="RRF"/>
    <property type="match status" value="1"/>
</dbReference>
<dbReference type="FunFam" id="1.10.132.20:FF:000001">
    <property type="entry name" value="Ribosome-recycling factor"/>
    <property type="match status" value="1"/>
</dbReference>
<dbReference type="FunFam" id="3.30.1360.40:FF:000001">
    <property type="entry name" value="Ribosome-recycling factor"/>
    <property type="match status" value="1"/>
</dbReference>
<dbReference type="Gene3D" id="3.30.1360.40">
    <property type="match status" value="1"/>
</dbReference>
<dbReference type="Gene3D" id="1.10.132.20">
    <property type="entry name" value="Ribosome-recycling factor"/>
    <property type="match status" value="1"/>
</dbReference>
<dbReference type="HAMAP" id="MF_00040">
    <property type="entry name" value="RRF"/>
    <property type="match status" value="1"/>
</dbReference>
<dbReference type="InterPro" id="IPR002661">
    <property type="entry name" value="Ribosome_recyc_fac"/>
</dbReference>
<dbReference type="InterPro" id="IPR023584">
    <property type="entry name" value="Ribosome_recyc_fac_dom"/>
</dbReference>
<dbReference type="InterPro" id="IPR036191">
    <property type="entry name" value="RRF_sf"/>
</dbReference>
<dbReference type="NCBIfam" id="TIGR00496">
    <property type="entry name" value="frr"/>
    <property type="match status" value="1"/>
</dbReference>
<dbReference type="PANTHER" id="PTHR20982:SF3">
    <property type="entry name" value="MITOCHONDRIAL RIBOSOME RECYCLING FACTOR PSEUDO 1"/>
    <property type="match status" value="1"/>
</dbReference>
<dbReference type="PANTHER" id="PTHR20982">
    <property type="entry name" value="RIBOSOME RECYCLING FACTOR"/>
    <property type="match status" value="1"/>
</dbReference>
<dbReference type="Pfam" id="PF01765">
    <property type="entry name" value="RRF"/>
    <property type="match status" value="1"/>
</dbReference>
<dbReference type="SUPFAM" id="SSF55194">
    <property type="entry name" value="Ribosome recycling factor, RRF"/>
    <property type="match status" value="1"/>
</dbReference>
<comment type="function">
    <text evidence="1">Responsible for the release of ribosomes from messenger RNA at the termination of protein biosynthesis. May increase the efficiency of translation by recycling ribosomes from one round of translation to another.</text>
</comment>
<comment type="subcellular location">
    <subcellularLocation>
        <location evidence="1">Cytoplasm</location>
    </subcellularLocation>
</comment>
<comment type="similarity">
    <text evidence="1">Belongs to the RRF family.</text>
</comment>
<gene>
    <name evidence="1" type="primary">frr</name>
    <name type="ordered locus">VCM66_2180</name>
</gene>
<name>RRF_VIBCM</name>
<organism>
    <name type="scientific">Vibrio cholerae serotype O1 (strain M66-2)</name>
    <dbReference type="NCBI Taxonomy" id="579112"/>
    <lineage>
        <taxon>Bacteria</taxon>
        <taxon>Pseudomonadati</taxon>
        <taxon>Pseudomonadota</taxon>
        <taxon>Gammaproteobacteria</taxon>
        <taxon>Vibrionales</taxon>
        <taxon>Vibrionaceae</taxon>
        <taxon>Vibrio</taxon>
    </lineage>
</organism>
<feature type="chain" id="PRO_1000117266" description="Ribosome-recycling factor">
    <location>
        <begin position="1"/>
        <end position="185"/>
    </location>
</feature>
<keyword id="KW-0963">Cytoplasm</keyword>
<keyword id="KW-0648">Protein biosynthesis</keyword>
<proteinExistence type="inferred from homology"/>
<sequence>MINEIKKDAQERMEKSVEALKNGLSKIRTGRAHPSLLTGISVDYYGAPTPLNQVANVIAEDARTLAITVFDRELTQKVEKAILMSDLGLNPMSAGTIIRVPLPPLTEERRRDLVKIVRGEAEGGRVAVRNIRRDANNDLKALLKDKEISEDDERRAQEEIQKLTDAAVKKIDDVLAAKEKELMEV</sequence>